<comment type="function">
    <text evidence="2">Probable hydrolase that can remove 'Lys-48'-linked conjugated ubiquitin from proteins.</text>
</comment>
<comment type="catalytic activity">
    <reaction evidence="2">
        <text>Thiol-dependent hydrolysis of ester, thioester, amide, peptide and isopeptide bonds formed by the C-terminal Gly of ubiquitin (a 76-residue protein attached to proteins as an intracellular targeting signal).</text>
        <dbReference type="EC" id="3.4.19.12"/>
    </reaction>
</comment>
<comment type="similarity">
    <text evidence="4">Belongs to the MINDY deubiquitinase family. FAM188 subfamily.</text>
</comment>
<dbReference type="EC" id="3.4.19.12"/>
<dbReference type="EMBL" id="BC121261">
    <property type="protein sequence ID" value="AAI21262.1"/>
    <property type="molecule type" value="mRNA"/>
</dbReference>
<dbReference type="RefSeq" id="NP_001072940.1">
    <property type="nucleotide sequence ID" value="NM_001079472.1"/>
</dbReference>
<dbReference type="FunCoup" id="Q0VA42">
    <property type="interactions" value="60"/>
</dbReference>
<dbReference type="STRING" id="8364.ENSXETP00000020812"/>
<dbReference type="PaxDb" id="8364-ENSXETP00000056614"/>
<dbReference type="GeneID" id="780771"/>
<dbReference type="KEGG" id="xtr:780771"/>
<dbReference type="AGR" id="Xenbase:XB-GENE-6456867"/>
<dbReference type="CTD" id="84182"/>
<dbReference type="Xenbase" id="XB-GENE-6456867">
    <property type="gene designation" value="mindy4"/>
</dbReference>
<dbReference type="eggNOG" id="KOG2871">
    <property type="taxonomic scope" value="Eukaryota"/>
</dbReference>
<dbReference type="InParanoid" id="Q0VA42"/>
<dbReference type="OMA" id="SCFSTEW"/>
<dbReference type="OrthoDB" id="10263628at2759"/>
<dbReference type="Proteomes" id="UP000008143">
    <property type="component" value="Chromosome 6"/>
</dbReference>
<dbReference type="Bgee" id="ENSXETG00000010688">
    <property type="expression patterns" value="Expressed in testis and 15 other cell types or tissues"/>
</dbReference>
<dbReference type="ExpressionAtlas" id="Q0VA42">
    <property type="expression patterns" value="baseline"/>
</dbReference>
<dbReference type="GO" id="GO:0004843">
    <property type="term" value="F:cysteine-type deubiquitinase activity"/>
    <property type="evidence" value="ECO:0007669"/>
    <property type="project" value="UniProtKB-EC"/>
</dbReference>
<dbReference type="GO" id="GO:1990380">
    <property type="term" value="F:K48-linked deubiquitinase activity"/>
    <property type="evidence" value="ECO:0007669"/>
    <property type="project" value="InterPro"/>
</dbReference>
<dbReference type="GO" id="GO:0071108">
    <property type="term" value="P:protein K48-linked deubiquitination"/>
    <property type="evidence" value="ECO:0007669"/>
    <property type="project" value="InterPro"/>
</dbReference>
<dbReference type="GO" id="GO:0006508">
    <property type="term" value="P:proteolysis"/>
    <property type="evidence" value="ECO:0007669"/>
    <property type="project" value="UniProtKB-KW"/>
</dbReference>
<dbReference type="InterPro" id="IPR025257">
    <property type="entry name" value="MINDY-3/4_CD"/>
</dbReference>
<dbReference type="InterPro" id="IPR039785">
    <property type="entry name" value="MINY3/4"/>
</dbReference>
<dbReference type="PANTHER" id="PTHR12473">
    <property type="entry name" value="UBIQUITIN CARBOXYL-TERMINAL HYDROLASE MINDY-4-RELATED"/>
    <property type="match status" value="1"/>
</dbReference>
<dbReference type="PANTHER" id="PTHR12473:SF8">
    <property type="entry name" value="UBIQUITIN CARBOXYL-TERMINAL HYDROLASE MINDY-4-RELATED"/>
    <property type="match status" value="1"/>
</dbReference>
<dbReference type="Pfam" id="PF13898">
    <property type="entry name" value="MINDY-3_4_CD"/>
    <property type="match status" value="1"/>
</dbReference>
<dbReference type="SMART" id="SM01174">
    <property type="entry name" value="DUF4205"/>
    <property type="match status" value="1"/>
</dbReference>
<accession>Q0VA42</accession>
<reference key="1">
    <citation type="submission" date="2006-08" db="EMBL/GenBank/DDBJ databases">
        <authorList>
            <consortium name="NIH - Xenopus Gene Collection (XGC) project"/>
        </authorList>
    </citation>
    <scope>NUCLEOTIDE SEQUENCE [LARGE SCALE MRNA]</scope>
    <source>
        <tissue>Brain</tissue>
    </source>
</reference>
<protein>
    <recommendedName>
        <fullName>Probable ubiquitin carboxyl-terminal hydrolase MINDY-4</fullName>
        <ecNumber>3.4.19.12</ecNumber>
    </recommendedName>
    <alternativeName>
        <fullName>Probable deubiquitinating enzyme MINDY-4</fullName>
    </alternativeName>
</protein>
<proteinExistence type="evidence at transcript level"/>
<feature type="chain" id="PRO_0000320593" description="Probable ubiquitin carboxyl-terminal hydrolase MINDY-4">
    <location>
        <begin position="1"/>
        <end position="746"/>
    </location>
</feature>
<feature type="region of interest" description="Disordered" evidence="3">
    <location>
        <begin position="123"/>
        <end position="179"/>
    </location>
</feature>
<feature type="region of interest" description="Disordered" evidence="3">
    <location>
        <begin position="198"/>
        <end position="254"/>
    </location>
</feature>
<feature type="region of interest" description="Disordered" evidence="3">
    <location>
        <begin position="319"/>
        <end position="342"/>
    </location>
</feature>
<feature type="compositionally biased region" description="Polar residues" evidence="3">
    <location>
        <begin position="141"/>
        <end position="152"/>
    </location>
</feature>
<feature type="compositionally biased region" description="Polar residues" evidence="3">
    <location>
        <begin position="165"/>
        <end position="174"/>
    </location>
</feature>
<feature type="active site" description="Nucleophile" evidence="1">
    <location>
        <position position="448"/>
    </location>
</feature>
<feature type="active site" description="Proton acceptor" evidence="1">
    <location>
        <position position="666"/>
    </location>
</feature>
<gene>
    <name type="primary">mindy4</name>
    <name type="synonym">fam188b</name>
</gene>
<name>MINY4_XENTR</name>
<evidence type="ECO:0000250" key="1">
    <source>
        <dbReference type="UniProtKB" id="Q8N5J2"/>
    </source>
</evidence>
<evidence type="ECO:0000250" key="2">
    <source>
        <dbReference type="UniProtKB" id="Q8NBR6"/>
    </source>
</evidence>
<evidence type="ECO:0000256" key="3">
    <source>
        <dbReference type="SAM" id="MobiDB-lite"/>
    </source>
</evidence>
<evidence type="ECO:0000305" key="4"/>
<organism>
    <name type="scientific">Xenopus tropicalis</name>
    <name type="common">Western clawed frog</name>
    <name type="synonym">Silurana tropicalis</name>
    <dbReference type="NCBI Taxonomy" id="8364"/>
    <lineage>
        <taxon>Eukaryota</taxon>
        <taxon>Metazoa</taxon>
        <taxon>Chordata</taxon>
        <taxon>Craniata</taxon>
        <taxon>Vertebrata</taxon>
        <taxon>Euteleostomi</taxon>
        <taxon>Amphibia</taxon>
        <taxon>Batrachia</taxon>
        <taxon>Anura</taxon>
        <taxon>Pipoidea</taxon>
        <taxon>Pipidae</taxon>
        <taxon>Xenopodinae</taxon>
        <taxon>Xenopus</taxon>
        <taxon>Silurana</taxon>
    </lineage>
</organism>
<keyword id="KW-0378">Hydrolase</keyword>
<keyword id="KW-0645">Protease</keyword>
<keyword id="KW-1185">Reference proteome</keyword>
<keyword id="KW-0788">Thiol protease</keyword>
<keyword id="KW-0833">Ubl conjugation pathway</keyword>
<sequence length="746" mass="82954">MEICYVQEVASSLVREFLSRKGLKKTSLTLEEELPRAPRSISTRNELRAALHLDRLYKENKLTEKPLKTLLEIMTKYFLEHSGKTKALNMRGEQNPAPPKGLATNLQQRHAGDLMMAVCDVSDDETGESSAVSDTSKTEIYRSQNDLQFNKSNHLKGPDRKQKQTEAGVTSTGVCSEGELMPPRVNIREHQERESWEMALGAKSSRSETQRPRSSRMVRGMMSGPTASSQEDSLKKRGPRRSAAANTPNPIKGEVLSEITGGMGEPSTIAPANTALKLGKEFAAKLLSTSENLRNVSLCSTNAVPKPNAFAAAETAADGKGATEASPYASNEHRRRSGFSNMDLNSASLAKKTLPFHRERNDKEDLKLDDVEDCLVTEEIRNIPTALPGNLKQIEGKPIDLAQAVEIKKILFGSSFCCFSDEWKIQSFTFNNNQPLRYGFIQKKGGPCGVLAAVQGCVLKNLLFGKDADLRVLQPSDSQRTSCLCKAIADILWRAGDNKEAVVALSCGRPQFSPAGRYKADGILESLILYKIRKYEDLMGFVQQHISQFELGPFGCTLLTLSVVLSRSVELVQKDFDVSTNCLIGAHSYCTQELVNLILSGRAVSNVFNDVVELDSGNGNITLLRGVAHRTDIGFLSLFEHYNVCQVGSYLKTPRFPIWVICSESHFSVLFCVRRELMSDWKMERRFDLYYYDGLANQQDEIRLTVDTAATYIEEQENDLTPPLEHCIRTKWKGAVIDWNGTEPIL</sequence>